<reference key="1">
    <citation type="journal article" date="2002" name="Nature">
        <title>Comparison of the genomes of two Xanthomonas pathogens with differing host specificities.</title>
        <authorList>
            <person name="da Silva A.C.R."/>
            <person name="Ferro J.A."/>
            <person name="Reinach F.C."/>
            <person name="Farah C.S."/>
            <person name="Furlan L.R."/>
            <person name="Quaggio R.B."/>
            <person name="Monteiro-Vitorello C.B."/>
            <person name="Van Sluys M.A."/>
            <person name="Almeida N.F. Jr."/>
            <person name="Alves L.M.C."/>
            <person name="do Amaral A.M."/>
            <person name="Bertolini M.C."/>
            <person name="Camargo L.E.A."/>
            <person name="Camarotte G."/>
            <person name="Cannavan F."/>
            <person name="Cardozo J."/>
            <person name="Chambergo F."/>
            <person name="Ciapina L.P."/>
            <person name="Cicarelli R.M.B."/>
            <person name="Coutinho L.L."/>
            <person name="Cursino-Santos J.R."/>
            <person name="El-Dorry H."/>
            <person name="Faria J.B."/>
            <person name="Ferreira A.J.S."/>
            <person name="Ferreira R.C.C."/>
            <person name="Ferro M.I.T."/>
            <person name="Formighieri E.F."/>
            <person name="Franco M.C."/>
            <person name="Greggio C.C."/>
            <person name="Gruber A."/>
            <person name="Katsuyama A.M."/>
            <person name="Kishi L.T."/>
            <person name="Leite R.P."/>
            <person name="Lemos E.G.M."/>
            <person name="Lemos M.V.F."/>
            <person name="Locali E.C."/>
            <person name="Machado M.A."/>
            <person name="Madeira A.M.B.N."/>
            <person name="Martinez-Rossi N.M."/>
            <person name="Martins E.C."/>
            <person name="Meidanis J."/>
            <person name="Menck C.F.M."/>
            <person name="Miyaki C.Y."/>
            <person name="Moon D.H."/>
            <person name="Moreira L.M."/>
            <person name="Novo M.T.M."/>
            <person name="Okura V.K."/>
            <person name="Oliveira M.C."/>
            <person name="Oliveira V.R."/>
            <person name="Pereira H.A."/>
            <person name="Rossi A."/>
            <person name="Sena J.A.D."/>
            <person name="Silva C."/>
            <person name="de Souza R.F."/>
            <person name="Spinola L.A.F."/>
            <person name="Takita M.A."/>
            <person name="Tamura R.E."/>
            <person name="Teixeira E.C."/>
            <person name="Tezza R.I.D."/>
            <person name="Trindade dos Santos M."/>
            <person name="Truffi D."/>
            <person name="Tsai S.M."/>
            <person name="White F.F."/>
            <person name="Setubal J.C."/>
            <person name="Kitajima J.P."/>
        </authorList>
    </citation>
    <scope>NUCLEOTIDE SEQUENCE [LARGE SCALE GENOMIC DNA]</scope>
    <source>
        <strain>306</strain>
    </source>
</reference>
<gene>
    <name evidence="1" type="primary">argC</name>
    <name type="ordered locus">XAC2346</name>
</gene>
<name>ARGC_XANAC</name>
<evidence type="ECO:0000255" key="1">
    <source>
        <dbReference type="HAMAP-Rule" id="MF_00150"/>
    </source>
</evidence>
<organism>
    <name type="scientific">Xanthomonas axonopodis pv. citri (strain 306)</name>
    <dbReference type="NCBI Taxonomy" id="190486"/>
    <lineage>
        <taxon>Bacteria</taxon>
        <taxon>Pseudomonadati</taxon>
        <taxon>Pseudomonadota</taxon>
        <taxon>Gammaproteobacteria</taxon>
        <taxon>Lysobacterales</taxon>
        <taxon>Lysobacteraceae</taxon>
        <taxon>Xanthomonas</taxon>
    </lineage>
</organism>
<protein>
    <recommendedName>
        <fullName evidence="1">N-acetyl-gamma-glutamyl-phosphate reductase</fullName>
        <shortName evidence="1">AGPR</shortName>
        <ecNumber evidence="1">1.2.1.38</ecNumber>
    </recommendedName>
    <alternativeName>
        <fullName evidence="1">N-acetyl-glutamate semialdehyde dehydrogenase</fullName>
        <shortName evidence="1">NAGSA dehydrogenase</shortName>
    </alternativeName>
</protein>
<sequence length="316" mass="34190">MTVQPKTIGIVGARGHTGSELIKLVAAHPQLHLSFVSSRELAGQRVAEHNDAYQGQLRYENLDADAVAVKAADVVILALPNGKAAPFVAAIDAATPQTLVIDLSADYRFDPAWYYGLPELTRGSYAGQRRISNPGCYATAMQLTIAPLLDQLAGPPQCFGVSGYSGAGTTPSDKNNPELLSNNLMPYALTNHMHEREVSAQLGVPVEFMPHVAPHFRGITMTVNLWLQQPLTREQIQARYTQRYADEPLIEIVDEAPWVSRIAGKHGVQIGGVTLAPGNKRVVVVATLDNLLKGAATQAMQNLNLALGWDELMAIR</sequence>
<proteinExistence type="inferred from homology"/>
<accession>Q8PK31</accession>
<dbReference type="EC" id="1.2.1.38" evidence="1"/>
<dbReference type="EMBL" id="AE008923">
    <property type="protein sequence ID" value="AAM37198.1"/>
    <property type="molecule type" value="Genomic_DNA"/>
</dbReference>
<dbReference type="RefSeq" id="WP_005913120.1">
    <property type="nucleotide sequence ID" value="NC_003919.1"/>
</dbReference>
<dbReference type="SMR" id="Q8PK31"/>
<dbReference type="GeneID" id="66911465"/>
<dbReference type="KEGG" id="xac:XAC2346"/>
<dbReference type="eggNOG" id="COG0002">
    <property type="taxonomic scope" value="Bacteria"/>
</dbReference>
<dbReference type="HOGENOM" id="CLU_006384_3_0_6"/>
<dbReference type="UniPathway" id="UPA00068">
    <property type="reaction ID" value="UER00108"/>
</dbReference>
<dbReference type="Proteomes" id="UP000000576">
    <property type="component" value="Chromosome"/>
</dbReference>
<dbReference type="GO" id="GO:0005737">
    <property type="term" value="C:cytoplasm"/>
    <property type="evidence" value="ECO:0007669"/>
    <property type="project" value="UniProtKB-SubCell"/>
</dbReference>
<dbReference type="GO" id="GO:0003942">
    <property type="term" value="F:N-acetyl-gamma-glutamyl-phosphate reductase activity"/>
    <property type="evidence" value="ECO:0007669"/>
    <property type="project" value="UniProtKB-UniRule"/>
</dbReference>
<dbReference type="GO" id="GO:0051287">
    <property type="term" value="F:NAD binding"/>
    <property type="evidence" value="ECO:0007669"/>
    <property type="project" value="InterPro"/>
</dbReference>
<dbReference type="GO" id="GO:0070401">
    <property type="term" value="F:NADP+ binding"/>
    <property type="evidence" value="ECO:0007669"/>
    <property type="project" value="InterPro"/>
</dbReference>
<dbReference type="GO" id="GO:0006526">
    <property type="term" value="P:L-arginine biosynthetic process"/>
    <property type="evidence" value="ECO:0007669"/>
    <property type="project" value="UniProtKB-UniRule"/>
</dbReference>
<dbReference type="CDD" id="cd23936">
    <property type="entry name" value="AGPR_C_ARG5_6_like"/>
    <property type="match status" value="1"/>
</dbReference>
<dbReference type="CDD" id="cd24149">
    <property type="entry name" value="AGPR_N_ARG5_6_like"/>
    <property type="match status" value="1"/>
</dbReference>
<dbReference type="Gene3D" id="3.30.360.10">
    <property type="entry name" value="Dihydrodipicolinate Reductase, domain 2"/>
    <property type="match status" value="1"/>
</dbReference>
<dbReference type="Gene3D" id="3.40.50.720">
    <property type="entry name" value="NAD(P)-binding Rossmann-like Domain"/>
    <property type="match status" value="1"/>
</dbReference>
<dbReference type="HAMAP" id="MF_00150">
    <property type="entry name" value="ArgC_type1"/>
    <property type="match status" value="1"/>
</dbReference>
<dbReference type="InterPro" id="IPR023013">
    <property type="entry name" value="AGPR_AS"/>
</dbReference>
<dbReference type="InterPro" id="IPR000706">
    <property type="entry name" value="AGPR_type-1"/>
</dbReference>
<dbReference type="InterPro" id="IPR036291">
    <property type="entry name" value="NAD(P)-bd_dom_sf"/>
</dbReference>
<dbReference type="InterPro" id="IPR050085">
    <property type="entry name" value="NAGSA_dehydrogenase"/>
</dbReference>
<dbReference type="InterPro" id="IPR000534">
    <property type="entry name" value="Semialdehyde_DH_NAD-bd"/>
</dbReference>
<dbReference type="NCBIfam" id="TIGR01850">
    <property type="entry name" value="argC"/>
    <property type="match status" value="1"/>
</dbReference>
<dbReference type="PANTHER" id="PTHR32338:SF10">
    <property type="entry name" value="N-ACETYL-GAMMA-GLUTAMYL-PHOSPHATE REDUCTASE, CHLOROPLASTIC-RELATED"/>
    <property type="match status" value="1"/>
</dbReference>
<dbReference type="PANTHER" id="PTHR32338">
    <property type="entry name" value="N-ACETYL-GAMMA-GLUTAMYL-PHOSPHATE REDUCTASE, CHLOROPLASTIC-RELATED-RELATED"/>
    <property type="match status" value="1"/>
</dbReference>
<dbReference type="Pfam" id="PF01118">
    <property type="entry name" value="Semialdhyde_dh"/>
    <property type="match status" value="1"/>
</dbReference>
<dbReference type="Pfam" id="PF22698">
    <property type="entry name" value="Semialdhyde_dhC_1"/>
    <property type="match status" value="1"/>
</dbReference>
<dbReference type="SMART" id="SM00859">
    <property type="entry name" value="Semialdhyde_dh"/>
    <property type="match status" value="1"/>
</dbReference>
<dbReference type="SUPFAM" id="SSF55347">
    <property type="entry name" value="Glyceraldehyde-3-phosphate dehydrogenase-like, C-terminal domain"/>
    <property type="match status" value="1"/>
</dbReference>
<dbReference type="SUPFAM" id="SSF51735">
    <property type="entry name" value="NAD(P)-binding Rossmann-fold domains"/>
    <property type="match status" value="1"/>
</dbReference>
<dbReference type="PROSITE" id="PS01224">
    <property type="entry name" value="ARGC"/>
    <property type="match status" value="1"/>
</dbReference>
<comment type="function">
    <text evidence="1">Catalyzes the NADPH-dependent reduction of N-acetyl-5-glutamyl phosphate to yield N-acetyl-L-glutamate 5-semialdehyde.</text>
</comment>
<comment type="catalytic activity">
    <reaction evidence="1">
        <text>N-acetyl-L-glutamate 5-semialdehyde + phosphate + NADP(+) = N-acetyl-L-glutamyl 5-phosphate + NADPH + H(+)</text>
        <dbReference type="Rhea" id="RHEA:21588"/>
        <dbReference type="ChEBI" id="CHEBI:15378"/>
        <dbReference type="ChEBI" id="CHEBI:29123"/>
        <dbReference type="ChEBI" id="CHEBI:43474"/>
        <dbReference type="ChEBI" id="CHEBI:57783"/>
        <dbReference type="ChEBI" id="CHEBI:57936"/>
        <dbReference type="ChEBI" id="CHEBI:58349"/>
        <dbReference type="EC" id="1.2.1.38"/>
    </reaction>
</comment>
<comment type="pathway">
    <text evidence="1">Amino-acid biosynthesis; L-arginine biosynthesis; N(2)-acetyl-L-ornithine from L-glutamate: step 3/4.</text>
</comment>
<comment type="subcellular location">
    <subcellularLocation>
        <location evidence="1">Cytoplasm</location>
    </subcellularLocation>
</comment>
<comment type="similarity">
    <text evidence="1">Belongs to the NAGSA dehydrogenase family. Type 1 subfamily.</text>
</comment>
<feature type="chain" id="PRO_0000112476" description="N-acetyl-gamma-glutamyl-phosphate reductase">
    <location>
        <begin position="1"/>
        <end position="316"/>
    </location>
</feature>
<feature type="active site" evidence="1">
    <location>
        <position position="136"/>
    </location>
</feature>
<keyword id="KW-0028">Amino-acid biosynthesis</keyword>
<keyword id="KW-0055">Arginine biosynthesis</keyword>
<keyword id="KW-0963">Cytoplasm</keyword>
<keyword id="KW-0521">NADP</keyword>
<keyword id="KW-0560">Oxidoreductase</keyword>